<protein>
    <recommendedName>
        <fullName evidence="1">Acetyl-coenzyme A carboxylase carboxyl transferase subunit alpha</fullName>
        <shortName evidence="1">ACCase subunit alpha</shortName>
        <shortName evidence="1">Acetyl-CoA carboxylase carboxyltransferase subunit alpha</shortName>
        <ecNumber evidence="1">2.1.3.15</ecNumber>
    </recommendedName>
</protein>
<gene>
    <name evidence="1" type="primary">accA</name>
    <name type="ordered locus">CAB367</name>
</gene>
<proteinExistence type="inferred from homology"/>
<reference key="1">
    <citation type="journal article" date="2005" name="Genome Res.">
        <title>The Chlamydophila abortus genome sequence reveals an array of variable proteins that contribute to interspecies variation.</title>
        <authorList>
            <person name="Thomson N.R."/>
            <person name="Yeats C."/>
            <person name="Bell K."/>
            <person name="Holden M.T.G."/>
            <person name="Bentley S.D."/>
            <person name="Livingstone M."/>
            <person name="Cerdeno-Tarraga A.-M."/>
            <person name="Harris B."/>
            <person name="Doggett J."/>
            <person name="Ormond D."/>
            <person name="Mungall K."/>
            <person name="Clarke K."/>
            <person name="Feltwell T."/>
            <person name="Hance Z."/>
            <person name="Sanders M."/>
            <person name="Quail M.A."/>
            <person name="Price C."/>
            <person name="Barrell B.G."/>
            <person name="Parkhill J."/>
            <person name="Longbottom D."/>
        </authorList>
    </citation>
    <scope>NUCLEOTIDE SEQUENCE [LARGE SCALE GENOMIC DNA]</scope>
    <source>
        <strain>DSM 27085 / S26/3</strain>
    </source>
</reference>
<evidence type="ECO:0000255" key="1">
    <source>
        <dbReference type="HAMAP-Rule" id="MF_00823"/>
    </source>
</evidence>
<evidence type="ECO:0000255" key="2">
    <source>
        <dbReference type="PROSITE-ProRule" id="PRU01137"/>
    </source>
</evidence>
<accession>Q5L6A8</accession>
<name>ACCA_CHLAB</name>
<sequence length="324" mass="36520">MELLPHEKQVVEYEKTIAEFKEKNKKNSLLSSSEIQKLERRLDKLKEKIYADLTPWERVQICRHPSRPRSVNYIEGMCEEFVELCGDRTFRDDPAVVGGLAKIQGQRFMLIGQEKGCDTSSRMHRNFGMLCPEGFRKALRLAKMAEKFGLSIVFLVDTPGAFPGLTAEERGQGWAIANNLFQLARLKTPIIVLVIGEGCSGGALGMAIGDVIAMLEHSYYSVISPEGCASILWKDPKKNSEAAAMLKMHGEDLKQFAIVDVVIKEPVGGAHHNPAAVYRDVRDFILREWLRLKDLSIEDLLEQRYQKFRTIGLYETSSESSPEA</sequence>
<comment type="function">
    <text evidence="1">Component of the acetyl coenzyme A carboxylase (ACC) complex. First, biotin carboxylase catalyzes the carboxylation of biotin on its carrier protein (BCCP) and then the CO(2) group is transferred by the carboxyltransferase to acetyl-CoA to form malonyl-CoA.</text>
</comment>
<comment type="catalytic activity">
    <reaction evidence="1">
        <text>N(6)-carboxybiotinyl-L-lysyl-[protein] + acetyl-CoA = N(6)-biotinyl-L-lysyl-[protein] + malonyl-CoA</text>
        <dbReference type="Rhea" id="RHEA:54728"/>
        <dbReference type="Rhea" id="RHEA-COMP:10505"/>
        <dbReference type="Rhea" id="RHEA-COMP:10506"/>
        <dbReference type="ChEBI" id="CHEBI:57288"/>
        <dbReference type="ChEBI" id="CHEBI:57384"/>
        <dbReference type="ChEBI" id="CHEBI:83144"/>
        <dbReference type="ChEBI" id="CHEBI:83145"/>
        <dbReference type="EC" id="2.1.3.15"/>
    </reaction>
</comment>
<comment type="pathway">
    <text evidence="1">Lipid metabolism; malonyl-CoA biosynthesis; malonyl-CoA from acetyl-CoA: step 1/1.</text>
</comment>
<comment type="subunit">
    <text evidence="1">Acetyl-CoA carboxylase is a heterohexamer composed of biotin carboxyl carrier protein (AccB), biotin carboxylase (AccC) and two subunits each of ACCase subunit alpha (AccA) and ACCase subunit beta (AccD).</text>
</comment>
<comment type="subcellular location">
    <subcellularLocation>
        <location evidence="1">Cytoplasm</location>
    </subcellularLocation>
</comment>
<comment type="similarity">
    <text evidence="1">Belongs to the AccA family.</text>
</comment>
<organism>
    <name type="scientific">Chlamydia abortus (strain DSM 27085 / S26/3)</name>
    <name type="common">Chlamydophila abortus</name>
    <dbReference type="NCBI Taxonomy" id="218497"/>
    <lineage>
        <taxon>Bacteria</taxon>
        <taxon>Pseudomonadati</taxon>
        <taxon>Chlamydiota</taxon>
        <taxon>Chlamydiia</taxon>
        <taxon>Chlamydiales</taxon>
        <taxon>Chlamydiaceae</taxon>
        <taxon>Chlamydia/Chlamydophila group</taxon>
        <taxon>Chlamydia</taxon>
    </lineage>
</organism>
<keyword id="KW-0067">ATP-binding</keyword>
<keyword id="KW-0963">Cytoplasm</keyword>
<keyword id="KW-0275">Fatty acid biosynthesis</keyword>
<keyword id="KW-0276">Fatty acid metabolism</keyword>
<keyword id="KW-0444">Lipid biosynthesis</keyword>
<keyword id="KW-0443">Lipid metabolism</keyword>
<keyword id="KW-0547">Nucleotide-binding</keyword>
<keyword id="KW-0808">Transferase</keyword>
<dbReference type="EC" id="2.1.3.15" evidence="1"/>
<dbReference type="EMBL" id="CR848038">
    <property type="protein sequence ID" value="CAH63820.1"/>
    <property type="molecule type" value="Genomic_DNA"/>
</dbReference>
<dbReference type="RefSeq" id="WP_011097021.1">
    <property type="nucleotide sequence ID" value="NC_004552.2"/>
</dbReference>
<dbReference type="SMR" id="Q5L6A8"/>
<dbReference type="KEGG" id="cab:CAB367"/>
<dbReference type="eggNOG" id="COG0825">
    <property type="taxonomic scope" value="Bacteria"/>
</dbReference>
<dbReference type="HOGENOM" id="CLU_015486_0_2_0"/>
<dbReference type="OrthoDB" id="9808023at2"/>
<dbReference type="UniPathway" id="UPA00655">
    <property type="reaction ID" value="UER00711"/>
</dbReference>
<dbReference type="Proteomes" id="UP000001012">
    <property type="component" value="Chromosome"/>
</dbReference>
<dbReference type="GO" id="GO:0009317">
    <property type="term" value="C:acetyl-CoA carboxylase complex"/>
    <property type="evidence" value="ECO:0007669"/>
    <property type="project" value="InterPro"/>
</dbReference>
<dbReference type="GO" id="GO:0003989">
    <property type="term" value="F:acetyl-CoA carboxylase activity"/>
    <property type="evidence" value="ECO:0007669"/>
    <property type="project" value="InterPro"/>
</dbReference>
<dbReference type="GO" id="GO:0005524">
    <property type="term" value="F:ATP binding"/>
    <property type="evidence" value="ECO:0007669"/>
    <property type="project" value="UniProtKB-KW"/>
</dbReference>
<dbReference type="GO" id="GO:0016743">
    <property type="term" value="F:carboxyl- or carbamoyltransferase activity"/>
    <property type="evidence" value="ECO:0007669"/>
    <property type="project" value="UniProtKB-UniRule"/>
</dbReference>
<dbReference type="GO" id="GO:0006633">
    <property type="term" value="P:fatty acid biosynthetic process"/>
    <property type="evidence" value="ECO:0007669"/>
    <property type="project" value="UniProtKB-KW"/>
</dbReference>
<dbReference type="GO" id="GO:2001295">
    <property type="term" value="P:malonyl-CoA biosynthetic process"/>
    <property type="evidence" value="ECO:0007669"/>
    <property type="project" value="UniProtKB-UniRule"/>
</dbReference>
<dbReference type="Gene3D" id="3.90.226.10">
    <property type="entry name" value="2-enoyl-CoA Hydratase, Chain A, domain 1"/>
    <property type="match status" value="1"/>
</dbReference>
<dbReference type="HAMAP" id="MF_00823">
    <property type="entry name" value="AcetylCoA_CT_alpha"/>
    <property type="match status" value="1"/>
</dbReference>
<dbReference type="InterPro" id="IPR001095">
    <property type="entry name" value="Acetyl_CoA_COase_a_su"/>
</dbReference>
<dbReference type="InterPro" id="IPR029045">
    <property type="entry name" value="ClpP/crotonase-like_dom_sf"/>
</dbReference>
<dbReference type="InterPro" id="IPR011763">
    <property type="entry name" value="COA_CT_C"/>
</dbReference>
<dbReference type="NCBIfam" id="TIGR00513">
    <property type="entry name" value="accA"/>
    <property type="match status" value="1"/>
</dbReference>
<dbReference type="NCBIfam" id="NF041504">
    <property type="entry name" value="AccA_sub"/>
    <property type="match status" value="1"/>
</dbReference>
<dbReference type="NCBIfam" id="NF004344">
    <property type="entry name" value="PRK05724.1"/>
    <property type="match status" value="1"/>
</dbReference>
<dbReference type="PANTHER" id="PTHR42853">
    <property type="entry name" value="ACETYL-COENZYME A CARBOXYLASE CARBOXYL TRANSFERASE SUBUNIT ALPHA"/>
    <property type="match status" value="1"/>
</dbReference>
<dbReference type="PANTHER" id="PTHR42853:SF3">
    <property type="entry name" value="ACETYL-COENZYME A CARBOXYLASE CARBOXYL TRANSFERASE SUBUNIT ALPHA, CHLOROPLASTIC"/>
    <property type="match status" value="1"/>
</dbReference>
<dbReference type="Pfam" id="PF03255">
    <property type="entry name" value="ACCA"/>
    <property type="match status" value="1"/>
</dbReference>
<dbReference type="PRINTS" id="PR01069">
    <property type="entry name" value="ACCCTRFRASEA"/>
</dbReference>
<dbReference type="SUPFAM" id="SSF52096">
    <property type="entry name" value="ClpP/crotonase"/>
    <property type="match status" value="1"/>
</dbReference>
<dbReference type="PROSITE" id="PS50989">
    <property type="entry name" value="COA_CT_CTER"/>
    <property type="match status" value="1"/>
</dbReference>
<feature type="chain" id="PRO_0000223755" description="Acetyl-coenzyme A carboxylase carboxyl transferase subunit alpha">
    <location>
        <begin position="1"/>
        <end position="324"/>
    </location>
</feature>
<feature type="domain" description="CoA carboxyltransferase C-terminal" evidence="2">
    <location>
        <begin position="37"/>
        <end position="291"/>
    </location>
</feature>